<keyword id="KW-0067">ATP-binding</keyword>
<keyword id="KW-0436">Ligase</keyword>
<keyword id="KW-0460">Magnesium</keyword>
<keyword id="KW-0464">Manganese</keyword>
<keyword id="KW-0479">Metal-binding</keyword>
<keyword id="KW-0547">Nucleotide-binding</keyword>
<keyword id="KW-0658">Purine biosynthesis</keyword>
<name>PUR2_STAAW</name>
<sequence>MNVLEIGAGGREHALAYKLNQSNLVKQVFAIPGNEAMTPIAEVHTEISESDHQAILDFAKRQNVDWVVIGPEQPLIDGLADILRANGFKVFGPNKQAAQIEGSKLFAKKIMEKYNIPTADYKEVERKKDALTYIENCELPVVVKKDGLAAGKGVIIADTIEAARSAIEIMYGDEEEGTVVFETFLEGEEFSLMTFVNGDLAVPFDCIAQDHKRAFDHDEGPNTGGMGAYCPVPHISDDVLKLTNETIAQPIAKAMLNEGYQFFGVLYIGAILTKNGPKVIEFNARFGDPEAQVLLSRMESDLMQHIIDLDEGKRTEFKWKNESIVGVMLASKGYPDAYEKGHKVSGFDLNENYFVSGLKKQGDTFVTSGGRVILAIGKGDNVQDAQRDAYEKVSQIQSDHLFYRHDIANKALQLK</sequence>
<gene>
    <name evidence="2" type="primary">purD</name>
    <name type="ordered locus">MW0957</name>
</gene>
<proteinExistence type="inferred from homology"/>
<organism>
    <name type="scientific">Staphylococcus aureus (strain MW2)</name>
    <dbReference type="NCBI Taxonomy" id="196620"/>
    <lineage>
        <taxon>Bacteria</taxon>
        <taxon>Bacillati</taxon>
        <taxon>Bacillota</taxon>
        <taxon>Bacilli</taxon>
        <taxon>Bacillales</taxon>
        <taxon>Staphylococcaceae</taxon>
        <taxon>Staphylococcus</taxon>
    </lineage>
</organism>
<accession>Q8NX87</accession>
<reference key="1">
    <citation type="journal article" date="2002" name="Lancet">
        <title>Genome and virulence determinants of high virulence community-acquired MRSA.</title>
        <authorList>
            <person name="Baba T."/>
            <person name="Takeuchi F."/>
            <person name="Kuroda M."/>
            <person name="Yuzawa H."/>
            <person name="Aoki K."/>
            <person name="Oguchi A."/>
            <person name="Nagai Y."/>
            <person name="Iwama N."/>
            <person name="Asano K."/>
            <person name="Naimi T."/>
            <person name="Kuroda H."/>
            <person name="Cui L."/>
            <person name="Yamamoto K."/>
            <person name="Hiramatsu K."/>
        </authorList>
    </citation>
    <scope>NUCLEOTIDE SEQUENCE [LARGE SCALE GENOMIC DNA]</scope>
    <source>
        <strain>MW2</strain>
    </source>
</reference>
<feature type="chain" id="PRO_0000151483" description="Phosphoribosylamine--glycine ligase">
    <location>
        <begin position="1"/>
        <end position="415"/>
    </location>
</feature>
<feature type="domain" description="ATP-grasp" evidence="2">
    <location>
        <begin position="108"/>
        <end position="311"/>
    </location>
</feature>
<feature type="binding site" evidence="2">
    <location>
        <begin position="134"/>
        <end position="191"/>
    </location>
    <ligand>
        <name>ATP</name>
        <dbReference type="ChEBI" id="CHEBI:30616"/>
    </ligand>
</feature>
<feature type="binding site" evidence="2">
    <location>
        <position position="281"/>
    </location>
    <ligand>
        <name>Mg(2+)</name>
        <dbReference type="ChEBI" id="CHEBI:18420"/>
    </ligand>
</feature>
<feature type="binding site" evidence="2">
    <location>
        <position position="283"/>
    </location>
    <ligand>
        <name>Mg(2+)</name>
        <dbReference type="ChEBI" id="CHEBI:18420"/>
    </ligand>
</feature>
<protein>
    <recommendedName>
        <fullName evidence="2">Phosphoribosylamine--glycine ligase</fullName>
        <ecNumber evidence="2">6.3.4.13</ecNumber>
    </recommendedName>
    <alternativeName>
        <fullName evidence="2">GARS</fullName>
    </alternativeName>
    <alternativeName>
        <fullName evidence="2">Glycinamide ribonucleotide synthetase</fullName>
    </alternativeName>
    <alternativeName>
        <fullName evidence="2">Phosphoribosylglycinamide synthetase</fullName>
    </alternativeName>
</protein>
<evidence type="ECO:0000250" key="1"/>
<evidence type="ECO:0000255" key="2">
    <source>
        <dbReference type="HAMAP-Rule" id="MF_00138"/>
    </source>
</evidence>
<comment type="catalytic activity">
    <reaction evidence="2">
        <text>5-phospho-beta-D-ribosylamine + glycine + ATP = N(1)-(5-phospho-beta-D-ribosyl)glycinamide + ADP + phosphate + H(+)</text>
        <dbReference type="Rhea" id="RHEA:17453"/>
        <dbReference type="ChEBI" id="CHEBI:15378"/>
        <dbReference type="ChEBI" id="CHEBI:30616"/>
        <dbReference type="ChEBI" id="CHEBI:43474"/>
        <dbReference type="ChEBI" id="CHEBI:57305"/>
        <dbReference type="ChEBI" id="CHEBI:58681"/>
        <dbReference type="ChEBI" id="CHEBI:143788"/>
        <dbReference type="ChEBI" id="CHEBI:456216"/>
        <dbReference type="EC" id="6.3.4.13"/>
    </reaction>
</comment>
<comment type="cofactor">
    <cofactor evidence="1">
        <name>Mg(2+)</name>
        <dbReference type="ChEBI" id="CHEBI:18420"/>
    </cofactor>
    <cofactor evidence="1">
        <name>Mn(2+)</name>
        <dbReference type="ChEBI" id="CHEBI:29035"/>
    </cofactor>
    <text evidence="1">Binds 1 Mg(2+) or Mn(2+) ion per subunit.</text>
</comment>
<comment type="pathway">
    <text evidence="2">Purine metabolism; IMP biosynthesis via de novo pathway; N(1)-(5-phospho-D-ribosyl)glycinamide from 5-phospho-alpha-D-ribose 1-diphosphate: step 2/2.</text>
</comment>
<comment type="similarity">
    <text evidence="2">Belongs to the GARS family.</text>
</comment>
<dbReference type="EC" id="6.3.4.13" evidence="2"/>
<dbReference type="EMBL" id="BA000033">
    <property type="protein sequence ID" value="BAB94822.1"/>
    <property type="molecule type" value="Genomic_DNA"/>
</dbReference>
<dbReference type="RefSeq" id="WP_001101474.1">
    <property type="nucleotide sequence ID" value="NC_003923.1"/>
</dbReference>
<dbReference type="SMR" id="Q8NX87"/>
<dbReference type="KEGG" id="sam:MW0957"/>
<dbReference type="HOGENOM" id="CLU_027420_3_1_9"/>
<dbReference type="UniPathway" id="UPA00074">
    <property type="reaction ID" value="UER00125"/>
</dbReference>
<dbReference type="GO" id="GO:0005524">
    <property type="term" value="F:ATP binding"/>
    <property type="evidence" value="ECO:0007669"/>
    <property type="project" value="UniProtKB-KW"/>
</dbReference>
<dbReference type="GO" id="GO:0046872">
    <property type="term" value="F:metal ion binding"/>
    <property type="evidence" value="ECO:0007669"/>
    <property type="project" value="UniProtKB-KW"/>
</dbReference>
<dbReference type="GO" id="GO:0004637">
    <property type="term" value="F:phosphoribosylamine-glycine ligase activity"/>
    <property type="evidence" value="ECO:0007669"/>
    <property type="project" value="UniProtKB-UniRule"/>
</dbReference>
<dbReference type="GO" id="GO:0006189">
    <property type="term" value="P:'de novo' IMP biosynthetic process"/>
    <property type="evidence" value="ECO:0007669"/>
    <property type="project" value="UniProtKB-UniRule"/>
</dbReference>
<dbReference type="GO" id="GO:0009113">
    <property type="term" value="P:purine nucleobase biosynthetic process"/>
    <property type="evidence" value="ECO:0007669"/>
    <property type="project" value="InterPro"/>
</dbReference>
<dbReference type="Gene3D" id="3.40.50.20">
    <property type="match status" value="1"/>
</dbReference>
<dbReference type="Gene3D" id="3.30.1490.20">
    <property type="entry name" value="ATP-grasp fold, A domain"/>
    <property type="match status" value="1"/>
</dbReference>
<dbReference type="Gene3D" id="3.30.470.20">
    <property type="entry name" value="ATP-grasp fold, B domain"/>
    <property type="match status" value="1"/>
</dbReference>
<dbReference type="Gene3D" id="3.90.600.10">
    <property type="entry name" value="Phosphoribosylglycinamide synthetase, C-terminal domain"/>
    <property type="match status" value="1"/>
</dbReference>
<dbReference type="HAMAP" id="MF_00138">
    <property type="entry name" value="GARS"/>
    <property type="match status" value="1"/>
</dbReference>
<dbReference type="InterPro" id="IPR011761">
    <property type="entry name" value="ATP-grasp"/>
</dbReference>
<dbReference type="InterPro" id="IPR013815">
    <property type="entry name" value="ATP_grasp_subdomain_1"/>
</dbReference>
<dbReference type="InterPro" id="IPR016185">
    <property type="entry name" value="PreATP-grasp_dom_sf"/>
</dbReference>
<dbReference type="InterPro" id="IPR020561">
    <property type="entry name" value="PRibGlycinamid_synth_ATP-grasp"/>
</dbReference>
<dbReference type="InterPro" id="IPR000115">
    <property type="entry name" value="PRibGlycinamide_synth"/>
</dbReference>
<dbReference type="InterPro" id="IPR020560">
    <property type="entry name" value="PRibGlycinamide_synth_C-dom"/>
</dbReference>
<dbReference type="InterPro" id="IPR037123">
    <property type="entry name" value="PRibGlycinamide_synth_C_sf"/>
</dbReference>
<dbReference type="InterPro" id="IPR020559">
    <property type="entry name" value="PRibGlycinamide_synth_CS"/>
</dbReference>
<dbReference type="InterPro" id="IPR020562">
    <property type="entry name" value="PRibGlycinamide_synth_N"/>
</dbReference>
<dbReference type="InterPro" id="IPR011054">
    <property type="entry name" value="Rudment_hybrid_motif"/>
</dbReference>
<dbReference type="NCBIfam" id="TIGR00877">
    <property type="entry name" value="purD"/>
    <property type="match status" value="1"/>
</dbReference>
<dbReference type="PANTHER" id="PTHR43472">
    <property type="entry name" value="PHOSPHORIBOSYLAMINE--GLYCINE LIGASE"/>
    <property type="match status" value="1"/>
</dbReference>
<dbReference type="PANTHER" id="PTHR43472:SF1">
    <property type="entry name" value="PHOSPHORIBOSYLAMINE--GLYCINE LIGASE, CHLOROPLASTIC"/>
    <property type="match status" value="1"/>
</dbReference>
<dbReference type="Pfam" id="PF01071">
    <property type="entry name" value="GARS_A"/>
    <property type="match status" value="1"/>
</dbReference>
<dbReference type="Pfam" id="PF02843">
    <property type="entry name" value="GARS_C"/>
    <property type="match status" value="1"/>
</dbReference>
<dbReference type="Pfam" id="PF02844">
    <property type="entry name" value="GARS_N"/>
    <property type="match status" value="1"/>
</dbReference>
<dbReference type="SMART" id="SM01209">
    <property type="entry name" value="GARS_A"/>
    <property type="match status" value="1"/>
</dbReference>
<dbReference type="SMART" id="SM01210">
    <property type="entry name" value="GARS_C"/>
    <property type="match status" value="1"/>
</dbReference>
<dbReference type="SUPFAM" id="SSF56059">
    <property type="entry name" value="Glutathione synthetase ATP-binding domain-like"/>
    <property type="match status" value="1"/>
</dbReference>
<dbReference type="SUPFAM" id="SSF52440">
    <property type="entry name" value="PreATP-grasp domain"/>
    <property type="match status" value="1"/>
</dbReference>
<dbReference type="SUPFAM" id="SSF51246">
    <property type="entry name" value="Rudiment single hybrid motif"/>
    <property type="match status" value="1"/>
</dbReference>
<dbReference type="PROSITE" id="PS50975">
    <property type="entry name" value="ATP_GRASP"/>
    <property type="match status" value="1"/>
</dbReference>
<dbReference type="PROSITE" id="PS00184">
    <property type="entry name" value="GARS"/>
    <property type="match status" value="1"/>
</dbReference>